<keyword id="KW-0378">Hydrolase</keyword>
<keyword id="KW-0460">Magnesium</keyword>
<keyword id="KW-0511">Multifunctional enzyme</keyword>
<keyword id="KW-0548">Nucleotidyltransferase</keyword>
<keyword id="KW-0677">Repeat</keyword>
<keyword id="KW-0808">Transferase</keyword>
<gene>
    <name evidence="1" type="primary">glnD</name>
    <name type="ordered locus">lpl1684</name>
</gene>
<feature type="chain" id="PRO_0000192740" description="Bifunctional uridylyltransferase/uridylyl-removing enzyme">
    <location>
        <begin position="1"/>
        <end position="861"/>
    </location>
</feature>
<feature type="domain" description="HD" evidence="2">
    <location>
        <begin position="440"/>
        <end position="562"/>
    </location>
</feature>
<feature type="domain" description="ACT 1" evidence="1">
    <location>
        <begin position="679"/>
        <end position="760"/>
    </location>
</feature>
<feature type="domain" description="ACT 2" evidence="1">
    <location>
        <begin position="788"/>
        <end position="861"/>
    </location>
</feature>
<feature type="region of interest" description="Uridylyltransferase">
    <location>
        <begin position="1"/>
        <end position="321"/>
    </location>
</feature>
<feature type="region of interest" description="Uridylyl-removing">
    <location>
        <begin position="322"/>
        <end position="678"/>
    </location>
</feature>
<proteinExistence type="inferred from homology"/>
<organism>
    <name type="scientific">Legionella pneumophila (strain Lens)</name>
    <dbReference type="NCBI Taxonomy" id="297245"/>
    <lineage>
        <taxon>Bacteria</taxon>
        <taxon>Pseudomonadati</taxon>
        <taxon>Pseudomonadota</taxon>
        <taxon>Gammaproteobacteria</taxon>
        <taxon>Legionellales</taxon>
        <taxon>Legionellaceae</taxon>
        <taxon>Legionella</taxon>
    </lineage>
</organism>
<name>GLND_LEGPL</name>
<dbReference type="EC" id="2.7.7.59" evidence="1"/>
<dbReference type="EC" id="3.1.4.-" evidence="1"/>
<dbReference type="EMBL" id="CR628337">
    <property type="protein sequence ID" value="CAH15924.1"/>
    <property type="molecule type" value="Genomic_DNA"/>
</dbReference>
<dbReference type="RefSeq" id="WP_011215702.1">
    <property type="nucleotide sequence ID" value="NC_006369.1"/>
</dbReference>
<dbReference type="SMR" id="Q5WVX6"/>
<dbReference type="KEGG" id="lpf:lpl1684"/>
<dbReference type="LegioList" id="lpl1684"/>
<dbReference type="HOGENOM" id="CLU_012833_1_0_6"/>
<dbReference type="Proteomes" id="UP000002517">
    <property type="component" value="Chromosome"/>
</dbReference>
<dbReference type="GO" id="GO:0008773">
    <property type="term" value="F:[protein-PII] uridylyltransferase activity"/>
    <property type="evidence" value="ECO:0007669"/>
    <property type="project" value="UniProtKB-UniRule"/>
</dbReference>
<dbReference type="GO" id="GO:0008081">
    <property type="term" value="F:phosphoric diester hydrolase activity"/>
    <property type="evidence" value="ECO:0007669"/>
    <property type="project" value="UniProtKB-UniRule"/>
</dbReference>
<dbReference type="GO" id="GO:0006808">
    <property type="term" value="P:regulation of nitrogen utilization"/>
    <property type="evidence" value="ECO:0007669"/>
    <property type="project" value="UniProtKB-UniRule"/>
</dbReference>
<dbReference type="CDD" id="cd04899">
    <property type="entry name" value="ACT_ACR-UUR-like_2"/>
    <property type="match status" value="1"/>
</dbReference>
<dbReference type="CDD" id="cd04900">
    <property type="entry name" value="ACT_UUR-like_1"/>
    <property type="match status" value="1"/>
</dbReference>
<dbReference type="CDD" id="cd00077">
    <property type="entry name" value="HDc"/>
    <property type="match status" value="1"/>
</dbReference>
<dbReference type="CDD" id="cd05401">
    <property type="entry name" value="NT_GlnE_GlnD_like"/>
    <property type="match status" value="1"/>
</dbReference>
<dbReference type="Gene3D" id="3.30.460.10">
    <property type="entry name" value="Beta Polymerase, domain 2"/>
    <property type="match status" value="1"/>
</dbReference>
<dbReference type="Gene3D" id="1.10.3210.10">
    <property type="entry name" value="Hypothetical protein af1432"/>
    <property type="match status" value="1"/>
</dbReference>
<dbReference type="HAMAP" id="MF_00277">
    <property type="entry name" value="PII_uridylyl_transf"/>
    <property type="match status" value="1"/>
</dbReference>
<dbReference type="InterPro" id="IPR045865">
    <property type="entry name" value="ACT-like_dom_sf"/>
</dbReference>
<dbReference type="InterPro" id="IPR002912">
    <property type="entry name" value="ACT_dom"/>
</dbReference>
<dbReference type="InterPro" id="IPR005105">
    <property type="entry name" value="GlnD_Uridyltrans_N"/>
</dbReference>
<dbReference type="InterPro" id="IPR003607">
    <property type="entry name" value="HD/PDEase_dom"/>
</dbReference>
<dbReference type="InterPro" id="IPR006674">
    <property type="entry name" value="HD_domain"/>
</dbReference>
<dbReference type="InterPro" id="IPR043519">
    <property type="entry name" value="NT_sf"/>
</dbReference>
<dbReference type="InterPro" id="IPR013546">
    <property type="entry name" value="PII_UdlTrfase/GS_AdlTrfase"/>
</dbReference>
<dbReference type="InterPro" id="IPR010043">
    <property type="entry name" value="UTase/UR"/>
</dbReference>
<dbReference type="NCBIfam" id="TIGR01693">
    <property type="entry name" value="UTase_glnD"/>
    <property type="match status" value="1"/>
</dbReference>
<dbReference type="PANTHER" id="PTHR47320">
    <property type="entry name" value="BIFUNCTIONAL URIDYLYLTRANSFERASE/URIDYLYL-REMOVING ENZYME"/>
    <property type="match status" value="1"/>
</dbReference>
<dbReference type="PANTHER" id="PTHR47320:SF1">
    <property type="entry name" value="BIFUNCTIONAL URIDYLYLTRANSFERASE_URIDYLYL-REMOVING ENZYME"/>
    <property type="match status" value="1"/>
</dbReference>
<dbReference type="Pfam" id="PF03445">
    <property type="entry name" value="DUF294"/>
    <property type="match status" value="1"/>
</dbReference>
<dbReference type="Pfam" id="PF08335">
    <property type="entry name" value="GlnD_UR_UTase"/>
    <property type="match status" value="1"/>
</dbReference>
<dbReference type="Pfam" id="PF01966">
    <property type="entry name" value="HD"/>
    <property type="match status" value="1"/>
</dbReference>
<dbReference type="PIRSF" id="PIRSF006288">
    <property type="entry name" value="PII_uridyltransf"/>
    <property type="match status" value="1"/>
</dbReference>
<dbReference type="SMART" id="SM00471">
    <property type="entry name" value="HDc"/>
    <property type="match status" value="1"/>
</dbReference>
<dbReference type="SUPFAM" id="SSF55021">
    <property type="entry name" value="ACT-like"/>
    <property type="match status" value="1"/>
</dbReference>
<dbReference type="SUPFAM" id="SSF109604">
    <property type="entry name" value="HD-domain/PDEase-like"/>
    <property type="match status" value="1"/>
</dbReference>
<dbReference type="SUPFAM" id="SSF81301">
    <property type="entry name" value="Nucleotidyltransferase"/>
    <property type="match status" value="1"/>
</dbReference>
<dbReference type="SUPFAM" id="SSF81593">
    <property type="entry name" value="Nucleotidyltransferase substrate binding subunit/domain"/>
    <property type="match status" value="1"/>
</dbReference>
<dbReference type="PROSITE" id="PS51671">
    <property type="entry name" value="ACT"/>
    <property type="match status" value="2"/>
</dbReference>
<dbReference type="PROSITE" id="PS51831">
    <property type="entry name" value="HD"/>
    <property type="match status" value="1"/>
</dbReference>
<evidence type="ECO:0000255" key="1">
    <source>
        <dbReference type="HAMAP-Rule" id="MF_00277"/>
    </source>
</evidence>
<evidence type="ECO:0000255" key="2">
    <source>
        <dbReference type="PROSITE-ProRule" id="PRU01175"/>
    </source>
</evidence>
<comment type="function">
    <text evidence="1">Modifies, by uridylylation and deuridylylation, the PII regulatory proteins (GlnB and homologs), in response to the nitrogen status of the cell that GlnD senses through the glutamine level. Under low glutamine levels, catalyzes the conversion of the PII proteins and UTP to PII-UMP and PPi, while under higher glutamine levels, GlnD hydrolyzes PII-UMP to PII and UMP (deuridylylation). Thus, controls uridylylation state and activity of the PII proteins, and plays an important role in the regulation of nitrogen assimilation and metabolism.</text>
</comment>
<comment type="catalytic activity">
    <reaction evidence="1">
        <text>[protein-PII]-L-tyrosine + UTP = [protein-PII]-uridylyl-L-tyrosine + diphosphate</text>
        <dbReference type="Rhea" id="RHEA:13673"/>
        <dbReference type="Rhea" id="RHEA-COMP:12147"/>
        <dbReference type="Rhea" id="RHEA-COMP:12148"/>
        <dbReference type="ChEBI" id="CHEBI:33019"/>
        <dbReference type="ChEBI" id="CHEBI:46398"/>
        <dbReference type="ChEBI" id="CHEBI:46858"/>
        <dbReference type="ChEBI" id="CHEBI:90602"/>
        <dbReference type="EC" id="2.7.7.59"/>
    </reaction>
</comment>
<comment type="catalytic activity">
    <reaction evidence="1">
        <text>[protein-PII]-uridylyl-L-tyrosine + H2O = [protein-PII]-L-tyrosine + UMP + H(+)</text>
        <dbReference type="Rhea" id="RHEA:48600"/>
        <dbReference type="Rhea" id="RHEA-COMP:12147"/>
        <dbReference type="Rhea" id="RHEA-COMP:12148"/>
        <dbReference type="ChEBI" id="CHEBI:15377"/>
        <dbReference type="ChEBI" id="CHEBI:15378"/>
        <dbReference type="ChEBI" id="CHEBI:46858"/>
        <dbReference type="ChEBI" id="CHEBI:57865"/>
        <dbReference type="ChEBI" id="CHEBI:90602"/>
    </reaction>
</comment>
<comment type="cofactor">
    <cofactor evidence="1">
        <name>Mg(2+)</name>
        <dbReference type="ChEBI" id="CHEBI:18420"/>
    </cofactor>
</comment>
<comment type="activity regulation">
    <text evidence="1">Uridylyltransferase (UTase) activity is inhibited by glutamine, while glutamine activates uridylyl-removing (UR) activity.</text>
</comment>
<comment type="domain">
    <text evidence="1">Has four distinct domains: an N-terminal nucleotidyltransferase (NT) domain responsible for UTase activity, a central HD domain that encodes UR activity, and two C-terminal ACT domains that seem to have a role in glutamine sensing.</text>
</comment>
<comment type="similarity">
    <text evidence="1">Belongs to the GlnD family.</text>
</comment>
<protein>
    <recommendedName>
        <fullName evidence="1">Bifunctional uridylyltransferase/uridylyl-removing enzyme</fullName>
        <shortName evidence="1">UTase/UR</shortName>
    </recommendedName>
    <alternativeName>
        <fullName evidence="1">Bifunctional [protein-PII] modification enzyme</fullName>
    </alternativeName>
    <alternativeName>
        <fullName evidence="1">Bifunctional nitrogen sensor protein</fullName>
    </alternativeName>
    <domain>
        <recommendedName>
            <fullName evidence="1">[Protein-PII] uridylyltransferase</fullName>
            <shortName evidence="1">PII uridylyltransferase</shortName>
            <shortName evidence="1">UTase</shortName>
            <ecNumber evidence="1">2.7.7.59</ecNumber>
        </recommendedName>
    </domain>
    <domain>
        <recommendedName>
            <fullName evidence="1">[Protein-PII]-UMP uridylyl-removing enzyme</fullName>
            <shortName evidence="1">UR</shortName>
            <ecNumber evidence="1">3.1.4.-</ecNumber>
        </recommendedName>
    </domain>
</protein>
<accession>Q5WVX6</accession>
<reference key="1">
    <citation type="journal article" date="2004" name="Nat. Genet.">
        <title>Evidence in the Legionella pneumophila genome for exploitation of host cell functions and high genome plasticity.</title>
        <authorList>
            <person name="Cazalet C."/>
            <person name="Rusniok C."/>
            <person name="Brueggemann H."/>
            <person name="Zidane N."/>
            <person name="Magnier A."/>
            <person name="Ma L."/>
            <person name="Tichit M."/>
            <person name="Jarraud S."/>
            <person name="Bouchier C."/>
            <person name="Vandenesch F."/>
            <person name="Kunst F."/>
            <person name="Etienne J."/>
            <person name="Glaser P."/>
            <person name="Buchrieser C."/>
        </authorList>
    </citation>
    <scope>NUCLEOTIDE SEQUENCE [LARGE SCALE GENOMIC DNA]</scope>
    <source>
        <strain>Lens</strain>
    </source>
</reference>
<sequence length="861" mass="100671">MKNDNRIIKNTIKQFKEKLCRDFSQKANITSITRKLAVFIDTILIQLFIKNKLHFGDNFCLLALGSYGRRELQLHSDIDLLILHTEKVSNIQLQRAQKFIQDCWDVGLEVSHQITTVSSCANLASQDLSVISTIMDMFLLCGHGALMEELIYQTHTLHMWPSHQYFFAKLQEQQSRYAKYGETAYNLEPNIKNGPGGLRDLQILLSISKRHFKIKKLAEGIGYGFITDKEYEELKYCQNFLWRVRFALHMLAGKPEERLSFDYQVKLAQFFGYQDQSHILAIEQFMKDYFKVIKRNRELNEMLLQWFNETIVYHQKQKIIRLDDEFQLSNRFIEVRNNRVFKQNPQSILKLFYWLVKRPDIEGVRASTIRLIRESLFLMGKRFRESKETANIFVNIFRTGNDPYDALQRMNRYGVLAHYLDCFATVTGQMQYDLFHAYTVDQHTLFVIRNISRFKKNEYAKQFPLCAKIITALEKPEILYLGALFHDIAKGRGGDHSELGAIEAQQFTQRHYMEAEDSKLIVWLVRYHLLMSQTAQRKDIYDPKTIEQFCQLLPHAKYLDYLYLLTVADICGTNPTLWNAWKDSLLKELYHAAKTRLHKQQELLDEAALISIRKQYAMDILISDGISSRVIQDLWSQFKGKYFLHESPEVIARHTKAILNSKQFPVVIIMPHHSQGGTEVFIYMPHKDERFTITTSVLSNHHVTIQEAAIITCDNQFDLDTYIILDENNQAFLNEQRARDIQKSLCDHLANTGRLPAVSRRRLSRALTHFNVKTQINFIDDNTNHQTQLFLVTNDRPGLLATISRVFLTLNIHLHNAKIATAGERVEDMFYISNQTGYSLNHEEKTILKEKLILEISKSKY</sequence>